<evidence type="ECO:0000250" key="1"/>
<evidence type="ECO:0000256" key="2">
    <source>
        <dbReference type="SAM" id="MobiDB-lite"/>
    </source>
</evidence>
<evidence type="ECO:0000305" key="3"/>
<comment type="function">
    <text evidence="1">Involved in ribosome biogenesis. Required for normal pre-rRNA processing in internal transcribed spacer 1 (ITS1). May be involved in the movements of the replication forks (By similarity).</text>
</comment>
<comment type="subunit">
    <text evidence="1">Interacts with the 35S, 23S and 20S pre-rRNAs and with the U3 snoRNA.</text>
</comment>
<comment type="subcellular location">
    <subcellularLocation>
        <location evidence="1">Nucleus</location>
        <location evidence="1">Nucleolus</location>
    </subcellularLocation>
</comment>
<comment type="induction">
    <text evidence="1">Transiently up-regulated during the initial 15 minutes of dough-fermentation.</text>
</comment>
<comment type="similarity">
    <text evidence="3">Belongs to the SLX9 family.</text>
</comment>
<feature type="chain" id="PRO_0000333452" description="Ribosome biogenesis protein SLX9">
    <location>
        <begin position="1"/>
        <end position="210"/>
    </location>
</feature>
<feature type="region of interest" description="Disordered" evidence="2">
    <location>
        <begin position="1"/>
        <end position="33"/>
    </location>
</feature>
<feature type="compositionally biased region" description="Polar residues" evidence="2">
    <location>
        <begin position="10"/>
        <end position="21"/>
    </location>
</feature>
<gene>
    <name type="primary">SLX9</name>
    <name type="ORF">SCY_2296</name>
</gene>
<name>SLX9_YEAS7</name>
<accession>A6ZV63</accession>
<protein>
    <recommendedName>
        <fullName>Ribosome biogenesis protein SLX9</fullName>
    </recommendedName>
</protein>
<reference key="1">
    <citation type="journal article" date="2007" name="Proc. Natl. Acad. Sci. U.S.A.">
        <title>Genome sequencing and comparative analysis of Saccharomyces cerevisiae strain YJM789.</title>
        <authorList>
            <person name="Wei W."/>
            <person name="McCusker J.H."/>
            <person name="Hyman R.W."/>
            <person name="Jones T."/>
            <person name="Ning Y."/>
            <person name="Cao Z."/>
            <person name="Gu Z."/>
            <person name="Bruno D."/>
            <person name="Miranda M."/>
            <person name="Nguyen M."/>
            <person name="Wilhelmy J."/>
            <person name="Komp C."/>
            <person name="Tamse R."/>
            <person name="Wang X."/>
            <person name="Jia P."/>
            <person name="Luedi P."/>
            <person name="Oefner P.J."/>
            <person name="David L."/>
            <person name="Dietrich F.S."/>
            <person name="Li Y."/>
            <person name="Davis R.W."/>
            <person name="Steinmetz L.M."/>
        </authorList>
    </citation>
    <scope>NUCLEOTIDE SEQUENCE [LARGE SCALE GENOMIC DNA]</scope>
    <source>
        <strain>YJM789</strain>
    </source>
</reference>
<proteinExistence type="inferred from homology"/>
<keyword id="KW-0539">Nucleus</keyword>
<keyword id="KW-0690">Ribosome biogenesis</keyword>
<keyword id="KW-0698">rRNA processing</keyword>
<sequence>MVAKKRNTLRSKASARNSQNFGPDVANNGILDESYDIESDPRAFLHQPKETKKEKLLNRQNTFLSNLKGKSTLSDGIGANFDGISKSSIRRRKRKLREELKPRMQDLLTSLEQEKDLRGIIENSSKDMNNDDDIDMDSKIRFVDTKEMNLKKIEPGSVRIKKNQPNIRNQKGAKALAANETARFNQVLTNQDFQKNPFGALREVIKLQKH</sequence>
<organism>
    <name type="scientific">Saccharomyces cerevisiae (strain YJM789)</name>
    <name type="common">Baker's yeast</name>
    <dbReference type="NCBI Taxonomy" id="307796"/>
    <lineage>
        <taxon>Eukaryota</taxon>
        <taxon>Fungi</taxon>
        <taxon>Dikarya</taxon>
        <taxon>Ascomycota</taxon>
        <taxon>Saccharomycotina</taxon>
        <taxon>Saccharomycetes</taxon>
        <taxon>Saccharomycetales</taxon>
        <taxon>Saccharomycetaceae</taxon>
        <taxon>Saccharomyces</taxon>
    </lineage>
</organism>
<dbReference type="EMBL" id="AAFW02000102">
    <property type="protein sequence ID" value="EDN61671.1"/>
    <property type="molecule type" value="Genomic_DNA"/>
</dbReference>
<dbReference type="HOGENOM" id="CLU_1372424_0_0_1"/>
<dbReference type="Proteomes" id="UP000007060">
    <property type="component" value="Unassembled WGS sequence"/>
</dbReference>
<dbReference type="GO" id="GO:0030686">
    <property type="term" value="C:90S preribosome"/>
    <property type="evidence" value="ECO:0007669"/>
    <property type="project" value="InterPro"/>
</dbReference>
<dbReference type="GO" id="GO:0005730">
    <property type="term" value="C:nucleolus"/>
    <property type="evidence" value="ECO:0007669"/>
    <property type="project" value="UniProtKB-SubCell"/>
</dbReference>
<dbReference type="GO" id="GO:0030688">
    <property type="term" value="C:preribosome, small subunit precursor"/>
    <property type="evidence" value="ECO:0007669"/>
    <property type="project" value="InterPro"/>
</dbReference>
<dbReference type="GO" id="GO:0000462">
    <property type="term" value="P:maturation of SSU-rRNA from tricistronic rRNA transcript (SSU-rRNA, 5.8S rRNA, LSU-rRNA)"/>
    <property type="evidence" value="ECO:0007669"/>
    <property type="project" value="InterPro"/>
</dbReference>
<dbReference type="InterPro" id="IPR028160">
    <property type="entry name" value="Slx9-like"/>
</dbReference>
<dbReference type="Pfam" id="PF15341">
    <property type="entry name" value="SLX9"/>
    <property type="match status" value="1"/>
</dbReference>